<organism evidence="5">
    <name type="scientific">Vernicia fordii</name>
    <name type="common">Tung</name>
    <name type="synonym">Aleurites fordii</name>
    <dbReference type="NCBI Taxonomy" id="73154"/>
    <lineage>
        <taxon>Eukaryota</taxon>
        <taxon>Viridiplantae</taxon>
        <taxon>Streptophyta</taxon>
        <taxon>Embryophyta</taxon>
        <taxon>Tracheophyta</taxon>
        <taxon>Spermatophyta</taxon>
        <taxon>Magnoliopsida</taxon>
        <taxon>eudicotyledons</taxon>
        <taxon>Gunneridae</taxon>
        <taxon>Pentapetalae</taxon>
        <taxon>rosids</taxon>
        <taxon>fabids</taxon>
        <taxon>Malpighiales</taxon>
        <taxon>Euphorbiaceae</taxon>
        <taxon>Crotonoideae</taxon>
        <taxon>Aleuritideae</taxon>
        <taxon>Vernicia</taxon>
    </lineage>
</organism>
<dbReference type="EC" id="1.14.19.6" evidence="2"/>
<dbReference type="EMBL" id="AF525534">
    <property type="protein sequence ID" value="AAN87573.1"/>
    <property type="molecule type" value="mRNA"/>
</dbReference>
<dbReference type="SMR" id="Q8GZC3"/>
<dbReference type="BRENDA" id="1.14.19.34">
    <property type="organism ID" value="9082"/>
</dbReference>
<dbReference type="BRENDA" id="1.14.19.6">
    <property type="organism ID" value="9082"/>
</dbReference>
<dbReference type="UniPathway" id="UPA00658"/>
<dbReference type="GO" id="GO:0005789">
    <property type="term" value="C:endoplasmic reticulum membrane"/>
    <property type="evidence" value="ECO:0007669"/>
    <property type="project" value="UniProtKB-SubCell"/>
</dbReference>
<dbReference type="GO" id="GO:0102985">
    <property type="term" value="F:acyl-CoA (9+3)-desaturase activity"/>
    <property type="evidence" value="ECO:0007669"/>
    <property type="project" value="UniProtKB-EC"/>
</dbReference>
<dbReference type="GO" id="GO:0006636">
    <property type="term" value="P:unsaturated fatty acid biosynthetic process"/>
    <property type="evidence" value="ECO:0007669"/>
    <property type="project" value="UniProtKB-UniPathway"/>
</dbReference>
<dbReference type="CDD" id="cd03507">
    <property type="entry name" value="Delta12-FADS-like"/>
    <property type="match status" value="1"/>
</dbReference>
<dbReference type="InterPro" id="IPR005804">
    <property type="entry name" value="FA_desaturase_dom"/>
</dbReference>
<dbReference type="InterPro" id="IPR021863">
    <property type="entry name" value="FAS_N"/>
</dbReference>
<dbReference type="InterPro" id="IPR012171">
    <property type="entry name" value="Fatty_acid_desaturase"/>
</dbReference>
<dbReference type="PANTHER" id="PTHR32100">
    <property type="entry name" value="OMEGA-6 FATTY ACID DESATURASE, CHLOROPLASTIC"/>
    <property type="match status" value="1"/>
</dbReference>
<dbReference type="Pfam" id="PF11960">
    <property type="entry name" value="DUF3474"/>
    <property type="match status" value="1"/>
</dbReference>
<dbReference type="Pfam" id="PF00487">
    <property type="entry name" value="FA_desaturase"/>
    <property type="match status" value="1"/>
</dbReference>
<protein>
    <recommendedName>
        <fullName evidence="3">Delta(12)-fatty-acid desaturase FAD2</fullName>
        <ecNumber evidence="2">1.14.19.6</ecNumber>
    </recommendedName>
</protein>
<accession>Q8GZC3</accession>
<name>FAD2_VERFO</name>
<sequence>MGAGGRMSVPPPPKKLESEVLKRVPHSKPPFTLGQLKKAIPPHCFQRSVLRSFSYVVYDLTVAFIFYYIATNYFHLLPQPLSYVAWPIYWALQGCVLTGVWVIAHECGHHAFSDYQLLDDIVGLVLHSCLLVPYFSWKHSHRRHHSNTASLERDEVFVPKKKSSIRWFSKYLNNPPGRLFTLTITLTLGWPLYLAFNVSGRPYDRFACHYDPYGPIYTDRERTEIYISDAGVLAVTFGLYRLAAAKGLAWVICVYGVPLLIVNAFLVMITYLQHTHPSIPHYDSSEWDWLRGALATVDRDYGILNKVFHNITDTHVAHHLFSTMPHYHAMEATKAIKPILGEYYQFDGTPFYKAMWREAKECIYVEADDGDESKGVYWYNKKF</sequence>
<evidence type="ECO:0000255" key="1"/>
<evidence type="ECO:0000269" key="2">
    <source>
    </source>
</evidence>
<evidence type="ECO:0000303" key="3">
    <source>
    </source>
</evidence>
<evidence type="ECO:0000305" key="4"/>
<evidence type="ECO:0000312" key="5">
    <source>
        <dbReference type="EMBL" id="AAN87573.1"/>
    </source>
</evidence>
<feature type="chain" id="PRO_0000434404" description="Delta(12)-fatty-acid desaturase FAD2">
    <location>
        <begin position="1"/>
        <end position="383"/>
    </location>
</feature>
<feature type="transmembrane region" description="Helical" evidence="1">
    <location>
        <begin position="56"/>
        <end position="76"/>
    </location>
</feature>
<feature type="transmembrane region" description="Helical" evidence="1">
    <location>
        <begin position="84"/>
        <end position="104"/>
    </location>
</feature>
<feature type="transmembrane region" description="Helical" evidence="1">
    <location>
        <begin position="117"/>
        <end position="137"/>
    </location>
</feature>
<feature type="transmembrane region" description="Helical" evidence="1">
    <location>
        <begin position="179"/>
        <end position="199"/>
    </location>
</feature>
<feature type="transmembrane region" description="Helical" evidence="1">
    <location>
        <begin position="225"/>
        <end position="245"/>
    </location>
</feature>
<feature type="transmembrane region" description="Helical" evidence="1">
    <location>
        <begin position="249"/>
        <end position="269"/>
    </location>
</feature>
<feature type="short sequence motif" description="Histidine box-1" evidence="4">
    <location>
        <begin position="105"/>
        <end position="109"/>
    </location>
</feature>
<feature type="short sequence motif" description="Histidine box-2" evidence="4">
    <location>
        <begin position="141"/>
        <end position="145"/>
    </location>
</feature>
<feature type="short sequence motif" description="Histidine box-3" evidence="4">
    <location>
        <begin position="315"/>
        <end position="319"/>
    </location>
</feature>
<comment type="function">
    <text evidence="2">Catalyzes the desaturation of oleic acid (18:1(9Z)) to linoleic acid (18:2(9Z,12Z)).</text>
</comment>
<comment type="catalytic activity">
    <reaction evidence="2">
        <text>(9Z)-octadecenoyl-CoA + 2 Fe(II)-[cytochrome b5] + O2 + 2 H(+) = (9Z,12Z)-octadecadienoyl-CoA + 2 Fe(III)-[cytochrome b5] + 2 H2O</text>
        <dbReference type="Rhea" id="RHEA:25856"/>
        <dbReference type="Rhea" id="RHEA-COMP:10438"/>
        <dbReference type="Rhea" id="RHEA-COMP:10439"/>
        <dbReference type="ChEBI" id="CHEBI:15377"/>
        <dbReference type="ChEBI" id="CHEBI:15378"/>
        <dbReference type="ChEBI" id="CHEBI:15379"/>
        <dbReference type="ChEBI" id="CHEBI:29033"/>
        <dbReference type="ChEBI" id="CHEBI:29034"/>
        <dbReference type="ChEBI" id="CHEBI:57383"/>
        <dbReference type="ChEBI" id="CHEBI:57387"/>
        <dbReference type="EC" id="1.14.19.6"/>
    </reaction>
</comment>
<comment type="catalytic activity">
    <reaction evidence="2">
        <text>(9Z)-hexadecenoyl-CoA + 2 Fe(II)-[cytochrome b5] + O2 + 2 H(+) = (9Z,12Z)-hexadecadienoyl-CoA + 2 Fe(III)-[cytochrome b5] + 2 H2O</text>
        <dbReference type="Rhea" id="RHEA:45096"/>
        <dbReference type="Rhea" id="RHEA-COMP:10438"/>
        <dbReference type="Rhea" id="RHEA-COMP:10439"/>
        <dbReference type="ChEBI" id="CHEBI:15377"/>
        <dbReference type="ChEBI" id="CHEBI:15378"/>
        <dbReference type="ChEBI" id="CHEBI:15379"/>
        <dbReference type="ChEBI" id="CHEBI:29033"/>
        <dbReference type="ChEBI" id="CHEBI:29034"/>
        <dbReference type="ChEBI" id="CHEBI:61540"/>
        <dbReference type="ChEBI" id="CHEBI:76552"/>
        <dbReference type="EC" id="1.14.19.6"/>
    </reaction>
</comment>
<comment type="pathway">
    <text>Lipid metabolism; polyunsaturated fatty acid biosynthesis.</text>
</comment>
<comment type="subcellular location">
    <subcellularLocation>
        <location evidence="2">Endoplasmic reticulum membrane</location>
        <topology evidence="1">Multi-pass membrane protein</topology>
    </subcellularLocation>
</comment>
<comment type="tissue specificity">
    <text evidence="2">Expressed in leaves and seeds.</text>
</comment>
<comment type="domain">
    <text evidence="4">The histidine box domains may contain the active site and/or be involved in metal ion binding.</text>
</comment>
<comment type="similarity">
    <text evidence="4">Belongs to the fatty acid desaturase type 1 family.</text>
</comment>
<gene>
    <name evidence="3" type="primary">FAD2</name>
</gene>
<keyword id="KW-0256">Endoplasmic reticulum</keyword>
<keyword id="KW-0275">Fatty acid biosynthesis</keyword>
<keyword id="KW-0276">Fatty acid metabolism</keyword>
<keyword id="KW-0444">Lipid biosynthesis</keyword>
<keyword id="KW-0443">Lipid metabolism</keyword>
<keyword id="KW-0472">Membrane</keyword>
<keyword id="KW-0560">Oxidoreductase</keyword>
<keyword id="KW-0812">Transmembrane</keyword>
<keyword id="KW-1133">Transmembrane helix</keyword>
<proteinExistence type="evidence at protein level"/>
<reference key="1">
    <citation type="journal article" date="2002" name="Plant Physiol.">
        <title>Molecular analysis of a bifunctional fatty acid conjugase/desaturase from tung. Implications for the evolution of plant fatty acid diversity.</title>
        <authorList>
            <person name="Dyer J.M."/>
            <person name="Chapital D.C."/>
            <person name="Kuan J.C."/>
            <person name="Mullen R.T."/>
            <person name="Turner C."/>
            <person name="McKeon T.A."/>
            <person name="Pepperman A.B."/>
        </authorList>
    </citation>
    <scope>NUCLEOTIDE SEQUENCE [MRNA]</scope>
    <scope>CATALYTIC ACTIVITY</scope>
    <scope>SUBCELLULAR LOCATION</scope>
    <scope>TISSUE SPECIFICITY</scope>
    <scope>FUNCTION</scope>
</reference>